<proteinExistence type="inferred from homology"/>
<evidence type="ECO:0000250" key="1">
    <source>
        <dbReference type="UniProtKB" id="P34227"/>
    </source>
</evidence>
<evidence type="ECO:0000255" key="2">
    <source>
        <dbReference type="PROSITE-ProRule" id="PRU00691"/>
    </source>
</evidence>
<evidence type="ECO:0000305" key="3"/>
<name>PRDXL_DICDI</name>
<organism>
    <name type="scientific">Dictyostelium discoideum</name>
    <name type="common">Social amoeba</name>
    <dbReference type="NCBI Taxonomy" id="44689"/>
    <lineage>
        <taxon>Eukaryota</taxon>
        <taxon>Amoebozoa</taxon>
        <taxon>Evosea</taxon>
        <taxon>Eumycetozoa</taxon>
        <taxon>Dictyostelia</taxon>
        <taxon>Dictyosteliales</taxon>
        <taxon>Dictyosteliaceae</taxon>
        <taxon>Dictyostelium</taxon>
    </lineage>
</organism>
<accession>Q54SE2</accession>
<keyword id="KW-0049">Antioxidant</keyword>
<keyword id="KW-0560">Oxidoreductase</keyword>
<keyword id="KW-0575">Peroxidase</keyword>
<keyword id="KW-0676">Redox-active center</keyword>
<keyword id="KW-1185">Reference proteome</keyword>
<dbReference type="EC" id="1.11.1.24" evidence="1"/>
<dbReference type="EMBL" id="AAFI02000047">
    <property type="protein sequence ID" value="EAL66118.1"/>
    <property type="molecule type" value="Genomic_DNA"/>
</dbReference>
<dbReference type="RefSeq" id="XP_640097.1">
    <property type="nucleotide sequence ID" value="XM_635005.1"/>
</dbReference>
<dbReference type="SMR" id="Q54SE2"/>
<dbReference type="FunCoup" id="Q54SE2">
    <property type="interactions" value="83"/>
</dbReference>
<dbReference type="STRING" id="44689.Q54SE2"/>
<dbReference type="PeroxiBase" id="4099">
    <property type="entry name" value="Dd1CysPrx"/>
</dbReference>
<dbReference type="PaxDb" id="44689-DDB0238006"/>
<dbReference type="EnsemblProtists" id="EAL66118">
    <property type="protein sequence ID" value="EAL66118"/>
    <property type="gene ID" value="DDB_G0282517"/>
</dbReference>
<dbReference type="GeneID" id="8623628"/>
<dbReference type="KEGG" id="ddi:DDB_G0282517"/>
<dbReference type="dictyBase" id="DDB_G0282517"/>
<dbReference type="VEuPathDB" id="AmoebaDB:DDB_G0282517"/>
<dbReference type="eggNOG" id="KOG0854">
    <property type="taxonomic scope" value="Eukaryota"/>
</dbReference>
<dbReference type="HOGENOM" id="CLU_042529_4_2_1"/>
<dbReference type="InParanoid" id="Q54SE2"/>
<dbReference type="OMA" id="HGPMNIP"/>
<dbReference type="PhylomeDB" id="Q54SE2"/>
<dbReference type="Reactome" id="R-DDI-3299685">
    <property type="pathway name" value="Detoxification of Reactive Oxygen Species"/>
</dbReference>
<dbReference type="Reactome" id="R-DDI-6798695">
    <property type="pathway name" value="Neutrophil degranulation"/>
</dbReference>
<dbReference type="PRO" id="PR:Q54SE2"/>
<dbReference type="Proteomes" id="UP000002195">
    <property type="component" value="Chromosome 3"/>
</dbReference>
<dbReference type="GO" id="GO:0005829">
    <property type="term" value="C:cytosol"/>
    <property type="evidence" value="ECO:0000318"/>
    <property type="project" value="GO_Central"/>
</dbReference>
<dbReference type="GO" id="GO:0004601">
    <property type="term" value="F:peroxidase activity"/>
    <property type="evidence" value="ECO:0000318"/>
    <property type="project" value="GO_Central"/>
</dbReference>
<dbReference type="GO" id="GO:0140824">
    <property type="term" value="F:thioredoxin-dependent peroxiredoxin activity"/>
    <property type="evidence" value="ECO:0007669"/>
    <property type="project" value="UniProtKB-EC"/>
</dbReference>
<dbReference type="GO" id="GO:0045454">
    <property type="term" value="P:cell redox homeostasis"/>
    <property type="evidence" value="ECO:0000318"/>
    <property type="project" value="GO_Central"/>
</dbReference>
<dbReference type="CDD" id="cd03016">
    <property type="entry name" value="PRX_1cys"/>
    <property type="match status" value="1"/>
</dbReference>
<dbReference type="FunFam" id="3.30.1020.10:FF:000001">
    <property type="entry name" value="1-Cys peroxiredoxin"/>
    <property type="match status" value="1"/>
</dbReference>
<dbReference type="FunFam" id="3.40.30.10:FF:000011">
    <property type="entry name" value="Peroxiredoxin PRX1"/>
    <property type="match status" value="1"/>
</dbReference>
<dbReference type="Gene3D" id="3.30.1020.10">
    <property type="entry name" value="Antioxidant, Horf6, Chain A, domain2"/>
    <property type="match status" value="1"/>
</dbReference>
<dbReference type="Gene3D" id="3.40.30.10">
    <property type="entry name" value="Glutaredoxin"/>
    <property type="match status" value="1"/>
</dbReference>
<dbReference type="InterPro" id="IPR000866">
    <property type="entry name" value="AhpC/TSA"/>
</dbReference>
<dbReference type="InterPro" id="IPR024706">
    <property type="entry name" value="Peroxiredoxin_AhpC-typ"/>
</dbReference>
<dbReference type="InterPro" id="IPR019479">
    <property type="entry name" value="Peroxiredoxin_C"/>
</dbReference>
<dbReference type="InterPro" id="IPR045020">
    <property type="entry name" value="PRX_1cys"/>
</dbReference>
<dbReference type="InterPro" id="IPR036249">
    <property type="entry name" value="Thioredoxin-like_sf"/>
</dbReference>
<dbReference type="InterPro" id="IPR013766">
    <property type="entry name" value="Thioredoxin_domain"/>
</dbReference>
<dbReference type="PANTHER" id="PTHR43503">
    <property type="entry name" value="MCG48959-RELATED"/>
    <property type="match status" value="1"/>
</dbReference>
<dbReference type="PANTHER" id="PTHR43503:SF4">
    <property type="entry name" value="PEROXIREDOXIN-6"/>
    <property type="match status" value="1"/>
</dbReference>
<dbReference type="Pfam" id="PF10417">
    <property type="entry name" value="1-cysPrx_C"/>
    <property type="match status" value="1"/>
</dbReference>
<dbReference type="Pfam" id="PF00578">
    <property type="entry name" value="AhpC-TSA"/>
    <property type="match status" value="1"/>
</dbReference>
<dbReference type="PIRSF" id="PIRSF000239">
    <property type="entry name" value="AHPC"/>
    <property type="match status" value="1"/>
</dbReference>
<dbReference type="SUPFAM" id="SSF52833">
    <property type="entry name" value="Thioredoxin-like"/>
    <property type="match status" value="1"/>
</dbReference>
<dbReference type="PROSITE" id="PS51352">
    <property type="entry name" value="THIOREDOXIN_2"/>
    <property type="match status" value="1"/>
</dbReference>
<reference key="1">
    <citation type="journal article" date="2005" name="Nature">
        <title>The genome of the social amoeba Dictyostelium discoideum.</title>
        <authorList>
            <person name="Eichinger L."/>
            <person name="Pachebat J.A."/>
            <person name="Gloeckner G."/>
            <person name="Rajandream M.A."/>
            <person name="Sucgang R."/>
            <person name="Berriman M."/>
            <person name="Song J."/>
            <person name="Olsen R."/>
            <person name="Szafranski K."/>
            <person name="Xu Q."/>
            <person name="Tunggal B."/>
            <person name="Kummerfeld S."/>
            <person name="Madera M."/>
            <person name="Konfortov B.A."/>
            <person name="Rivero F."/>
            <person name="Bankier A.T."/>
            <person name="Lehmann R."/>
            <person name="Hamlin N."/>
            <person name="Davies R."/>
            <person name="Gaudet P."/>
            <person name="Fey P."/>
            <person name="Pilcher K."/>
            <person name="Chen G."/>
            <person name="Saunders D."/>
            <person name="Sodergren E.J."/>
            <person name="Davis P."/>
            <person name="Kerhornou A."/>
            <person name="Nie X."/>
            <person name="Hall N."/>
            <person name="Anjard C."/>
            <person name="Hemphill L."/>
            <person name="Bason N."/>
            <person name="Farbrother P."/>
            <person name="Desany B."/>
            <person name="Just E."/>
            <person name="Morio T."/>
            <person name="Rost R."/>
            <person name="Churcher C.M."/>
            <person name="Cooper J."/>
            <person name="Haydock S."/>
            <person name="van Driessche N."/>
            <person name="Cronin A."/>
            <person name="Goodhead I."/>
            <person name="Muzny D.M."/>
            <person name="Mourier T."/>
            <person name="Pain A."/>
            <person name="Lu M."/>
            <person name="Harper D."/>
            <person name="Lindsay R."/>
            <person name="Hauser H."/>
            <person name="James K.D."/>
            <person name="Quiles M."/>
            <person name="Madan Babu M."/>
            <person name="Saito T."/>
            <person name="Buchrieser C."/>
            <person name="Wardroper A."/>
            <person name="Felder M."/>
            <person name="Thangavelu M."/>
            <person name="Johnson D."/>
            <person name="Knights A."/>
            <person name="Loulseged H."/>
            <person name="Mungall K.L."/>
            <person name="Oliver K."/>
            <person name="Price C."/>
            <person name="Quail M.A."/>
            <person name="Urushihara H."/>
            <person name="Hernandez J."/>
            <person name="Rabbinowitsch E."/>
            <person name="Steffen D."/>
            <person name="Sanders M."/>
            <person name="Ma J."/>
            <person name="Kohara Y."/>
            <person name="Sharp S."/>
            <person name="Simmonds M.N."/>
            <person name="Spiegler S."/>
            <person name="Tivey A."/>
            <person name="Sugano S."/>
            <person name="White B."/>
            <person name="Walker D."/>
            <person name="Woodward J.R."/>
            <person name="Winckler T."/>
            <person name="Tanaka Y."/>
            <person name="Shaulsky G."/>
            <person name="Schleicher M."/>
            <person name="Weinstock G.M."/>
            <person name="Rosenthal A."/>
            <person name="Cox E.C."/>
            <person name="Chisholm R.L."/>
            <person name="Gibbs R.A."/>
            <person name="Loomis W.F."/>
            <person name="Platzer M."/>
            <person name="Kay R.R."/>
            <person name="Williams J.G."/>
            <person name="Dear P.H."/>
            <person name="Noegel A.A."/>
            <person name="Barrell B.G."/>
            <person name="Kuspa A."/>
        </authorList>
    </citation>
    <scope>NUCLEOTIDE SEQUENCE [LARGE SCALE GENOMIC DNA]</scope>
    <source>
        <strain>AX4</strain>
    </source>
</reference>
<comment type="function">
    <text evidence="1">Thiol-specific peroxidase that catalyzes the reduction of hydrogen peroxide and organic hydroperoxides to water and alcohols, respectively. Plays a role in cell protection against oxidative stress by detoxifying peroxides.</text>
</comment>
<comment type="catalytic activity">
    <reaction evidence="1">
        <text>a hydroperoxide + [thioredoxin]-dithiol = an alcohol + [thioredoxin]-disulfide + H2O</text>
        <dbReference type="Rhea" id="RHEA:62620"/>
        <dbReference type="Rhea" id="RHEA-COMP:10698"/>
        <dbReference type="Rhea" id="RHEA-COMP:10700"/>
        <dbReference type="ChEBI" id="CHEBI:15377"/>
        <dbReference type="ChEBI" id="CHEBI:29950"/>
        <dbReference type="ChEBI" id="CHEBI:30879"/>
        <dbReference type="ChEBI" id="CHEBI:35924"/>
        <dbReference type="ChEBI" id="CHEBI:50058"/>
        <dbReference type="EC" id="1.11.1.24"/>
    </reaction>
</comment>
<comment type="subunit">
    <text evidence="1">Homodimer.</text>
</comment>
<comment type="miscellaneous">
    <text evidence="1">The active site is a conserved redox-active cysteine residue, the peroxidatic cysteine (C(P)), which makes the nucleophilic attack on the peroxide substrate. The peroxide oxidizes the C(P)-SH to cysteine sulfenic acid (C(P)-SOH), which then reacts with another cysteine residue, the resolving cysteine (C(R)), to form a disulfide bridge. The disulfide is subsequently reduced by an appropriate electron donor to complete the catalytic cycle. In this 1-Cys peroxiredoxin, no C(R) is present and C(P) instead forms a disulfide with a cysteine from another protein or with a small thiol molecule.</text>
</comment>
<comment type="similarity">
    <text evidence="3">Belongs to the peroxiredoxin family. Prx6 subfamily.</text>
</comment>
<protein>
    <recommendedName>
        <fullName>1-Cys peroxiredoxin</fullName>
        <ecNumber evidence="1">1.11.1.24</ecNumber>
    </recommendedName>
    <alternativeName>
        <fullName>Thiol-specific antioxidant</fullName>
    </alternativeName>
    <alternativeName>
        <fullName>Thioredoxin peroxidase</fullName>
    </alternativeName>
    <alternativeName>
        <fullName evidence="3">Thioredoxin-dependent peroxiredoxin</fullName>
    </alternativeName>
</protein>
<feature type="chain" id="PRO_0000331376" description="1-Cys peroxiredoxin">
    <location>
        <begin position="1"/>
        <end position="241"/>
    </location>
</feature>
<feature type="domain" description="Thioredoxin" evidence="2">
    <location>
        <begin position="33"/>
        <end position="189"/>
    </location>
</feature>
<feature type="active site" description="Cysteine sulfenic acid (-SOH) intermediate" evidence="1">
    <location>
        <position position="75"/>
    </location>
</feature>
<gene>
    <name type="ORF">DDB_G0282517</name>
</gene>
<sequence>MSRIQQVNKSILIRSFCTGAPSKSNFSPVGNFLRIGDVVPDFSQDSSVGQINLYKTLGDSWGLFVSHPKDFTPICTTELGRLAKLKPEFEKRNCKILALSVDSVKDHLEWMKDIEETQKVKINYPIIADQDRKVADLYGMIHPNADNTFTVRSVFFISPDKRLRAQITLPASTGRNFNEIIRILDSFQLTDKYKVATPADWVDGDDCIIVPTVFDEDAKKLFPKGFPKIKSYLRVTPQPNK</sequence>